<feature type="chain" id="PRO_0000168167" description="Reticulon-4">
    <location>
        <begin position="1"/>
        <end position="1163"/>
    </location>
</feature>
<feature type="topological domain" description="Cytoplasmic" evidence="3">
    <location>
        <begin position="1"/>
        <end position="989"/>
    </location>
</feature>
<feature type="transmembrane region" description="Helical" evidence="3">
    <location>
        <begin position="990"/>
        <end position="1010"/>
    </location>
</feature>
<feature type="topological domain" description="Lumenal" evidence="3">
    <location>
        <begin position="1011"/>
        <end position="1104"/>
    </location>
</feature>
<feature type="transmembrane region" description="Helical" evidence="3">
    <location>
        <begin position="1105"/>
        <end position="1125"/>
    </location>
</feature>
<feature type="topological domain" description="Cytoplasmic" evidence="3">
    <location>
        <begin position="1126"/>
        <end position="1163"/>
    </location>
</feature>
<feature type="domain" description="Reticulon" evidence="4">
    <location>
        <begin position="976"/>
        <end position="1163"/>
    </location>
</feature>
<feature type="region of interest" description="Disordered" evidence="5">
    <location>
        <begin position="1"/>
        <end position="184"/>
    </location>
</feature>
<feature type="region of interest" description="Disordered" evidence="5">
    <location>
        <begin position="244"/>
        <end position="270"/>
    </location>
</feature>
<feature type="region of interest" description="Disordered" evidence="5">
    <location>
        <begin position="406"/>
        <end position="437"/>
    </location>
</feature>
<feature type="region of interest" description="Disordered" evidence="5">
    <location>
        <begin position="454"/>
        <end position="474"/>
    </location>
</feature>
<feature type="compositionally biased region" description="Low complexity" evidence="5">
    <location>
        <begin position="7"/>
        <end position="16"/>
    </location>
</feature>
<feature type="compositionally biased region" description="Acidic residues" evidence="5">
    <location>
        <begin position="31"/>
        <end position="55"/>
    </location>
</feature>
<feature type="compositionally biased region" description="Low complexity" evidence="5">
    <location>
        <begin position="62"/>
        <end position="79"/>
    </location>
</feature>
<feature type="compositionally biased region" description="Pro residues" evidence="5">
    <location>
        <begin position="87"/>
        <end position="101"/>
    </location>
</feature>
<feature type="compositionally biased region" description="Pro residues" evidence="5">
    <location>
        <begin position="138"/>
        <end position="147"/>
    </location>
</feature>
<feature type="compositionally biased region" description="Basic and acidic residues" evidence="5">
    <location>
        <begin position="406"/>
        <end position="423"/>
    </location>
</feature>
<feature type="compositionally biased region" description="Basic and acidic residues" evidence="5">
    <location>
        <begin position="461"/>
        <end position="474"/>
    </location>
</feature>
<feature type="modified residue" description="N-acetylmethionine" evidence="2">
    <location>
        <position position="1"/>
    </location>
</feature>
<feature type="modified residue" description="Phosphoserine" evidence="2">
    <location>
        <position position="7"/>
    </location>
</feature>
<feature type="modified residue" description="Phosphoserine" evidence="16">
    <location>
        <position position="16"/>
    </location>
</feature>
<feature type="modified residue" description="Phosphoserine" evidence="15">
    <location>
        <position position="107"/>
    </location>
</feature>
<feature type="modified residue" description="Phosphoserine" evidence="1">
    <location>
        <position position="149"/>
    </location>
</feature>
<feature type="modified residue" description="Phosphoserine" evidence="2">
    <location>
        <position position="169"/>
    </location>
</feature>
<feature type="modified residue" description="Phosphoserine" evidence="1">
    <location>
        <position position="171"/>
    </location>
</feature>
<feature type="modified residue" description="Phosphoserine" evidence="16">
    <location>
        <position position="329"/>
    </location>
</feature>
<feature type="modified residue" description="Phosphoserine" evidence="16">
    <location>
        <position position="333"/>
    </location>
</feature>
<feature type="modified residue" description="Phosphoserine" evidence="1">
    <location>
        <position position="343"/>
    </location>
</feature>
<feature type="modified residue" description="Phosphothreonine" evidence="1">
    <location>
        <position position="347"/>
    </location>
</feature>
<feature type="modified residue" description="Phosphoserine" evidence="16">
    <location>
        <position position="425"/>
    </location>
</feature>
<feature type="modified residue" description="Phosphothreonine" evidence="16">
    <location>
        <position position="429"/>
    </location>
</feature>
<feature type="modified residue" description="Phosphoserine" evidence="1">
    <location>
        <position position="488"/>
    </location>
</feature>
<feature type="modified residue" description="Phosphoserine" evidence="16">
    <location>
        <position position="689"/>
    </location>
</feature>
<feature type="modified residue" description="Phosphoserine" evidence="1">
    <location>
        <position position="726"/>
    </location>
</feature>
<feature type="modified residue" description="Phosphoserine" evidence="16">
    <location>
        <position position="766"/>
    </location>
</feature>
<feature type="modified residue" description="Phosphoserine" evidence="16">
    <location>
        <position position="830"/>
    </location>
</feature>
<feature type="modified residue" description="Phosphothreonine" evidence="16">
    <location>
        <position position="832"/>
    </location>
</feature>
<feature type="modified residue" description="Phosphoserine" evidence="1">
    <location>
        <position position="855"/>
    </location>
</feature>
<feature type="modified residue" description="Phosphoserine" evidence="16">
    <location>
        <position position="922"/>
    </location>
</feature>
<feature type="modified residue" description="Phosphoserine" evidence="2">
    <location>
        <position position="962"/>
    </location>
</feature>
<feature type="modified residue" description="N6-acetyllysine" evidence="2">
    <location>
        <position position="1075"/>
    </location>
</feature>
<feature type="splice variant" id="VSP_005656" description="In isoform C." evidence="11 12">
    <location>
        <begin position="1"/>
        <end position="964"/>
    </location>
</feature>
<feature type="splice variant" id="VSP_005658" description="In isoform B." evidence="12 13">
    <location>
        <begin position="173"/>
        <end position="975"/>
    </location>
</feature>
<feature type="splice variant" id="VSP_005659" description="In isoform B2." evidence="13">
    <location>
        <begin position="192"/>
        <end position="975"/>
    </location>
</feature>
<feature type="splice variant" id="VSP_005657" description="In isoform C." evidence="11 12">
    <original>AVLSAELSKTS</original>
    <variation>MDGQKKHWKDK</variation>
    <location>
        <begin position="965"/>
        <end position="975"/>
    </location>
</feature>
<feature type="sequence conflict" description="In Ref. 3; AAD31020." evidence="14" ref="3">
    <location>
        <begin position="1130"/>
        <end position="1131"/>
    </location>
</feature>
<reference key="1">
    <citation type="journal article" date="1999" name="Biochim. Biophys. Acta">
        <title>Cloning and characterization of a 22 kDa protein from rat adipocytes: a new member of the reticulon family.</title>
        <authorList>
            <person name="Morris N.J."/>
            <person name="Ross S.A."/>
            <person name="Neveu J.M."/>
            <person name="Lane W.S."/>
            <person name="Lienhard G.E."/>
        </authorList>
    </citation>
    <scope>NUCLEOTIDE SEQUENCE [MRNA] (ISOFORM C)</scope>
    <scope>PARTIAL PROTEIN SEQUENCE</scope>
    <source>
        <strain>Sprague-Dawley</strain>
        <tissue>Adipocyte</tissue>
    </source>
</reference>
<reference key="2">
    <citation type="journal article" date="2000" name="Nature">
        <title>Nogo-A is a myelin-associated neurite outgrowth inhibitor and an antigen for monoclonal antibody IN-1.</title>
        <authorList>
            <person name="Chen M.S."/>
            <person name="Huber A.B."/>
            <person name="Van der Haar M.E."/>
            <person name="Frank M."/>
            <person name="Schnell L."/>
            <person name="Spillmann A.A."/>
            <person name="Christ F."/>
            <person name="Schwab M.E."/>
        </authorList>
    </citation>
    <scope>NUCLEOTIDE SEQUENCE [MRNA] (ISOFORMS A; B AND C)</scope>
</reference>
<reference key="3">
    <citation type="submission" date="1999-02" db="EMBL/GenBank/DDBJ databases">
        <title>Cloning of a member of the reticulon gene family in rat: one of two minor splice variants.</title>
        <authorList>
            <person name="Ito T."/>
            <person name="Schwartz S.M."/>
        </authorList>
    </citation>
    <scope>NUCLEOTIDE SEQUENCE [MRNA] (ISOFORMS B AND B2)</scope>
    <source>
        <strain>Wistar Kyoto</strain>
        <tissue>Vascular smooth muscle</tissue>
    </source>
</reference>
<reference key="4">
    <citation type="journal article" date="2002" name="Nature">
        <title>Nogo-66 receptor antagonist peptide promotes axonal regeneration.</title>
        <authorList>
            <person name="GrandPre T."/>
            <person name="Li S."/>
            <person name="Strittmatter S.M."/>
        </authorList>
    </citation>
    <scope>FUNCTION</scope>
    <scope>DOMAIN</scope>
</reference>
<reference key="5">
    <citation type="journal article" date="2003" name="EMBO J.">
        <title>Nogo-A at CNS paranodes is a ligand of Caspr: possible regulation of K(+) channel localization.</title>
        <authorList>
            <person name="Nie D.-Y."/>
            <person name="Zhou Z.-H."/>
            <person name="Ang B.-T."/>
            <person name="Teng F.Y.H."/>
            <person name="Xu G."/>
            <person name="Xiang T."/>
            <person name="Wang C.-Y."/>
            <person name="Zeng L."/>
            <person name="Takeda Y."/>
            <person name="Xu T.-L."/>
            <person name="Ng Y.K."/>
            <person name="Faivre-Sarrailh C."/>
            <person name="Popko B."/>
            <person name="Ling E.-A."/>
            <person name="Schachner M."/>
            <person name="Watanabe K."/>
            <person name="Pallen C.J."/>
            <person name="Tang B.L."/>
            <person name="Xiao Z.-C."/>
        </authorList>
    </citation>
    <scope>INTERACTION WITH CNTNAP1</scope>
</reference>
<reference key="6">
    <citation type="journal article" date="2003" name="J. Neurosci.">
        <title>Nogo-A inhibits neurite outgrowth and cell spreading with three discrete regions.</title>
        <authorList>
            <person name="Oertle T."/>
            <person name="van der Haar M.E."/>
            <person name="Bandtlow C.E."/>
            <person name="Robeva A."/>
            <person name="Burfeind P."/>
            <person name="Buss A."/>
            <person name="Huber A.B."/>
            <person name="Simonen M."/>
            <person name="Schnell L."/>
            <person name="Brosamle C."/>
            <person name="Kaupmann K."/>
            <person name="Vallon R."/>
            <person name="Schwab M.E."/>
        </authorList>
    </citation>
    <scope>FUNCTION (ISOFORM A)</scope>
</reference>
<reference key="7">
    <citation type="journal article" date="2006" name="Proc. Natl. Acad. Sci. U.S.A.">
        <title>Quantitative phosphoproteomics of vasopressin-sensitive renal cells: regulation of aquaporin-2 phosphorylation at two sites.</title>
        <authorList>
            <person name="Hoffert J.D."/>
            <person name="Pisitkun T."/>
            <person name="Wang G."/>
            <person name="Shen R.-F."/>
            <person name="Knepper M.A."/>
        </authorList>
    </citation>
    <scope>PHOSPHORYLATION [LARGE SCALE ANALYSIS] AT SER-107</scope>
    <scope>IDENTIFICATION BY MASS SPECTROMETRY [LARGE SCALE ANALYSIS]</scope>
</reference>
<reference key="8">
    <citation type="journal article" date="2009" name="Cell">
        <title>A class of dynamin-like GTPases involved in the generation of the tubular ER network.</title>
        <authorList>
            <person name="Hu J."/>
            <person name="Shibata Y."/>
            <person name="Zhu P.-P."/>
            <person name="Voss C."/>
            <person name="Rismanchi N."/>
            <person name="Prinz W.A."/>
            <person name="Rapoport T.A."/>
            <person name="Blackstone C."/>
        </authorList>
    </citation>
    <scope>INTERACTION WITH ATL1</scope>
</reference>
<reference key="9">
    <citation type="journal article" date="2010" name="Development">
        <title>Neuronal Nogo-A regulates neurite fasciculation, branching and extension in the developing nervous system.</title>
        <authorList>
            <person name="Petrinovic M.M."/>
            <person name="Duncan C.S."/>
            <person name="Bourikas D."/>
            <person name="Weinman O."/>
            <person name="Montani L."/>
            <person name="Schroeter A."/>
            <person name="Maerki D."/>
            <person name="Sommer L."/>
            <person name="Stoeckli E.T."/>
            <person name="Schwab M.E."/>
        </authorList>
    </citation>
    <scope>FUNCTION (ISOFORM A)</scope>
</reference>
<reference key="10">
    <citation type="journal article" date="2012" name="Nat. Commun.">
        <title>Quantitative maps of protein phosphorylation sites across 14 different rat organs and tissues.</title>
        <authorList>
            <person name="Lundby A."/>
            <person name="Secher A."/>
            <person name="Lage K."/>
            <person name="Nordsborg N.B."/>
            <person name="Dmytriyev A."/>
            <person name="Lundby C."/>
            <person name="Olsen J.V."/>
        </authorList>
    </citation>
    <scope>PHOSPHORYLATION [LARGE SCALE ANALYSIS] AT SER-16; SER-329; SER-333; SER-425; THR-429; SER-689; SER-766; SER-830; THR-832 AND SER-922</scope>
    <scope>IDENTIFICATION BY MASS SPECTROMETRY [LARGE SCALE ANALYSIS]</scope>
</reference>
<sequence>MEDIDQSSLVSSSTDSPPRPPPAFKYQFVTEPEDEEDEEEEEDEEEDDEDLEELEVLERKPAAGLSAAAVPPAAAAPLLDFSSDSVPPAPRGPLPAAPPAAPERQPSWERSPAAPAPSLPPAAAVLPSKLPEDDEPPARPPPPPPAGASPLAEPAAPPSTPAAPKRRGSGSVDETLFALPAASEPVIPSSAEKIMDLMEQPGNTVSSGQEDFPSVLLETAASLPSLSPLSTVSFKEHGYLGNLSAVSSSEGTIEETLNEASKELPERATNPFVNRDLAEFSELEYSEMGSSFKGSPKGESAILVENTKEEVIVRSKDKEDLVCSAALHSPQESPVGKEDRVVSPEKTMDIFNEMQMSVVAPVREEYADFKPFEQAWEVKDTYEGSRDVLAARANVESKVDRKCLEDSLEQKSLGKDSEGRNEDASFPSTPEPVKDSSRAYITCASFTSATESTTANTFPLLEDHTSENKTDEKKIEERKAQIITEKTSPKTSNPFLVAVQDSEADYVTTDTLSKVTEAAVSNMPEGLTPDLVQEACESELNEATGTKIAYETKVDLVQTSEAIQESLYPTAQLCPSFEEAEATPSPVLPDIVMEAPLNSLLPSAGASVVQPSVSPLEAPPPVSYDSIKLEPENPPPYEEAMNVALKALGTKEGIKEPESFNAAVQETEAPYISIACDLIKETKLSTEPSPDFSNYSEIAKFEKSVPEHAELVEDSSPESEPVDLFSDDSIPEVPQTQEEAVMLMKESLTEVSETVAQHKEERLSASPQELGKPYLESFQPNLHSTKDAASNDIPTLTKKEKISLQMEEFNTAIYSNDDLLSSKEDKIKESETFSDSSPIEIIDEFPTFVSAKDDSPKLAKEYTDLEVSDKSEIANIQSGADSLPCLELPCDLSFKNIYPKDEVHVSDEFSENRSSVSKASISPSNVSALEPQTEMGSIVKSKSLTKEAEKKLPSDTEKEDRSLSAVLSAELSKTSVVDLLYWRDIKKTGVVFGASLFLLLSLTVFSIVSVTAYIALALLSVTISFRIYKGVIQAIQKSDEGHPFRAYLESEVAISEELVQKYSNSALGHVNSTIKELRRLFLVDDLVDSLKFAVLMWVFTYVGALFNGLTLLILALISLFSIPVIYERHQVQIDHYLGLANKSVKDAMAKIQAKIPGLKRKAD</sequence>
<evidence type="ECO:0000250" key="1">
    <source>
        <dbReference type="UniProtKB" id="Q99P72"/>
    </source>
</evidence>
<evidence type="ECO:0000250" key="2">
    <source>
        <dbReference type="UniProtKB" id="Q9NQC3"/>
    </source>
</evidence>
<evidence type="ECO:0000255" key="3"/>
<evidence type="ECO:0000255" key="4">
    <source>
        <dbReference type="PROSITE-ProRule" id="PRU00170"/>
    </source>
</evidence>
<evidence type="ECO:0000256" key="5">
    <source>
        <dbReference type="SAM" id="MobiDB-lite"/>
    </source>
</evidence>
<evidence type="ECO:0000269" key="6">
    <source>
    </source>
</evidence>
<evidence type="ECO:0000269" key="7">
    <source>
    </source>
</evidence>
<evidence type="ECO:0000269" key="8">
    <source>
    </source>
</evidence>
<evidence type="ECO:0000269" key="9">
    <source>
    </source>
</evidence>
<evidence type="ECO:0000269" key="10">
    <source>
    </source>
</evidence>
<evidence type="ECO:0000303" key="11">
    <source>
    </source>
</evidence>
<evidence type="ECO:0000303" key="12">
    <source>
    </source>
</evidence>
<evidence type="ECO:0000303" key="13">
    <source ref="3"/>
</evidence>
<evidence type="ECO:0000305" key="14"/>
<evidence type="ECO:0007744" key="15">
    <source>
    </source>
</evidence>
<evidence type="ECO:0007744" key="16">
    <source>
    </source>
</evidence>
<name>RTN4_RAT</name>
<proteinExistence type="evidence at protein level"/>
<comment type="function">
    <text evidence="14">Required to induce the formation and stabilization of endoplasmic reticulum (ER) tubules. They regulate membrane morphogenesis in the ER by promoting tubular ER production. They influence nuclear envelope expansion, nuclear pore complex formation and proper localization of inner nuclear membrane proteins. However each isoform have specific functions mainly depending on their tissue expression specificities.</text>
</comment>
<comment type="function">
    <molecule>Isoform A</molecule>
    <text evidence="1 6 7 10">Developmental neurite growth regulatory factor with a role as a negative regulator of axon-axon adhesion and growth, and as a facilitator of neurite branching. Regulates neurite fasciculation, branching and extension in the developing nervous system. Involved in down-regulation of growth, stabilization of wiring and restriction of plasticity in the adult CNS (PubMed:12037567, PubMed:12843238, PubMed:20573699). Regulates the radial migration of cortical neurons via an RTN4R-LINGO1 containing receptor complex. Acts as a negative regulator of central nervous system angiogenesis. Inhibits spreading, migration and sprouting of primary brain microvascular endothelial cells (MVECs). Also induces the retraction of MVECs lamellipodia and filopodia in a ROCK pathway-dependent manner (By similarity).</text>
</comment>
<comment type="function">
    <molecule>Isoform B</molecule>
    <text evidence="1 2">Mainly function in endothelial cells and vascular smooth muscle cells, is also involved in immune system regulation (By similarity). Modulator of vascular remodeling, promotes the migration of endothelial cells but inhibits the migration of vascular smooth muscle cells. Regulates endothelial sphingolipid biosynthesis with direct effects on vascular function and blood pressure. Inhibits serine palmitoyltransferase, SPTLC1, the rate-limiting enzyme of the novo sphingolipid biosynthetic pathway, thereby controlling production of endothelial sphingosine-1-phosphate (S1P). Required to promote macrophage homing and functions such as cytokine/chemokine gene expression involved in angiogenesis, arteriogenesis and tissue repair. Mediates ICAM1 induced transendothelial migration of leukocytes such as monocytes and neutrophils and acute inflammation. Necessary for immune responses triggered by nucleic acid sensing TLRs, such as TLR9, is required for proper TLR9 location to endolysosomes. Also involved in immune response to LPS. Plays a role in liver regeneration through the modulation of hepatocytes proliferation (By similarity). Reduces the anti-apoptotic activity of Bcl-xl and Bcl-2. This is likely consecutive to their change in subcellular location, from the mitochondria to the endoplasmic reticulum, after binding and sequestration. With isoform C, inhibits BACE1 activity and amyloid precursor protein processing (By similarity).</text>
</comment>
<comment type="function">
    <molecule>Isoform C</molecule>
    <text evidence="1 2">Regulates cardiomyocyte apoptosis upon hypoxic conditions (By similarity). With isoform B, inhibits BACE1 activity and amyloid precursor protein processing (By similarity).</text>
</comment>
<comment type="subunit">
    <text evidence="1 2 9">Binds to RTN4R (By similarity). Interacts with ATL1 (PubMed:19665976). Interacts with TMEM170A (By similarity). Interacts with RTN4IP1 (By similarity).</text>
</comment>
<comment type="subunit">
    <molecule>Isoform A</molecule>
    <text evidence="2 8">Interacts in trans with CNTNAP1 (PubMed:14592966). Interacts with REEP5 (By similarity). Interacts with synaptic plasticity regulator PANTS; the interaction results in enhanced RTN4-mediated inhibition of AMPA receptor clustering (By similarity). Interacts with GPR50 (By similarity).</text>
</comment>
<comment type="subunit">
    <molecule>Isoform B</molecule>
    <text evidence="1 2">Homodimer (By similarity). Interacts with BAD/Bcl-xl and BCL2. Interact with RTN3 (By similarity). Interacts with NGBR (By similarity). Interacts with SPTLC1 (By similarity). Interacts with GRAMD4 (By similarity). Interacts with CDH5 (By similarity). Interacts with BACE1 and BACE2 (By similarity). Interacts with REEP5 (By similarity). Interacts with RETREG3 (By similarity).</text>
</comment>
<comment type="subunit">
    <molecule>Isoform C</molecule>
    <text evidence="2">Interacts with BACE1 and BACE2 (By similarity). Interacts with TMEM33 (By similarity).</text>
</comment>
<comment type="interaction">
    <interactant intactId="EBI-919989">
        <id>Q9JK11-1</id>
    </interactant>
    <interactant intactId="EBI-2410213">
        <id>Q6PST4</id>
        <label>Atl1</label>
    </interactant>
    <organismsDiffer>false</organismsDiffer>
    <experiments>6</experiments>
</comment>
<comment type="interaction">
    <interactant intactId="EBI-919989">
        <id>Q9JK11-1</id>
    </interactant>
    <interactant intactId="EBI-8314699">
        <id>P48722</id>
        <label>Hspa4l</label>
    </interactant>
    <organismsDiffer>true</organismsDiffer>
    <experiments>6</experiments>
</comment>
<comment type="interaction">
    <interactant intactId="EBI-919989">
        <id>Q9JK11-1</id>
    </interactant>
    <interactant intactId="EBI-10634606">
        <id>O95136</id>
        <label>S1PR2</label>
    </interactant>
    <organismsDiffer>true</organismsDiffer>
    <experiments>2</experiments>
</comment>
<comment type="interaction">
    <interactant intactId="EBI-919989">
        <id>Q9JK11-1</id>
    </interactant>
    <interactant intactId="EBI-16091339">
        <id>P52592</id>
        <label>S1pr2</label>
    </interactant>
    <organismsDiffer>true</organismsDiffer>
    <experiments>3</experiments>
</comment>
<comment type="interaction">
    <interactant intactId="EBI-920002">
        <id>Q9JK11-3</id>
    </interactant>
    <interactant intactId="EBI-2410266">
        <id>Q8WXF7</id>
        <label>ATL1</label>
    </interactant>
    <organismsDiffer>true</organismsDiffer>
    <experiments>2</experiments>
</comment>
<comment type="subcellular location">
    <molecule>Isoform A</molecule>
    <subcellularLocation>
        <location evidence="2">Endoplasmic reticulum membrane</location>
        <topology evidence="3">Multi-pass membrane protein</topology>
    </subcellularLocation>
    <subcellularLocation>
        <location evidence="2">Cell membrane</location>
        <topology evidence="3">Multi-pass membrane protein</topology>
        <orientation evidence="2">Cytoplasmic side</orientation>
    </subcellularLocation>
    <subcellularLocation>
        <location evidence="1">Synapse</location>
    </subcellularLocation>
    <text evidence="2">Anchored to the membrane of the endoplasmic reticulum (ER) through 2 putative transmembrane domains. Localizes throughout the ER tubular network. Co-localizes with TMEM33 at the ER sheets.</text>
</comment>
<comment type="subcellular location">
    <molecule>Isoform B</molecule>
    <subcellularLocation>
        <location evidence="2">Endoplasmic reticulum membrane</location>
        <topology evidence="3">Multi-pass membrane protein</topology>
    </subcellularLocation>
    <subcellularLocation>
        <location evidence="2">Cell membrane</location>
        <topology evidence="3">Multi-pass membrane protein</topology>
        <orientation evidence="2">Extracellular side</orientation>
    </subcellularLocation>
    <subcellularLocation>
        <location evidence="2">Cell junction</location>
    </subcellularLocation>
    <text evidence="2">Mainly located on endoplasmic reticulum tubules and sheet edges. Upon ICAM1 engagement, redistributed toward endothelial junctions where interacts with CDH5.</text>
</comment>
<comment type="subcellular location">
    <molecule>Isoform C</molecule>
    <subcellularLocation>
        <location evidence="2">Endoplasmic reticulum membrane</location>
        <topology evidence="3">Multi-pass membrane protein</topology>
    </subcellularLocation>
</comment>
<comment type="alternative products">
    <event type="alternative splicing"/>
    <isoform>
        <id>Q9JK11-1</id>
        <name>A</name>
        <name>Nogo-A</name>
        <name>NI-220-250</name>
        <sequence type="displayed"/>
    </isoform>
    <isoform>
        <id>Q9JK11-2</id>
        <name>B</name>
        <name>Nogo-B</name>
        <name>Foocen-M1</name>
        <sequence type="described" ref="VSP_005658"/>
    </isoform>
    <isoform>
        <id>Q9JK11-3</id>
        <name>C</name>
        <name>Nogo-C</name>
        <name>VP20</name>
        <sequence type="described" ref="VSP_005656 VSP_005657"/>
    </isoform>
    <isoform>
        <id>Q9JK11-4</id>
        <name>B2</name>
        <name>Foocen-M2</name>
        <sequence type="described" ref="VSP_005659"/>
    </isoform>
</comment>
<comment type="tissue specificity">
    <text>Isoforms A, B and C are present in optic nerve, spinal cord and cerebral cortex. Isoforms A and B are present in dorsal root ganglion, sciatic nerve and PC12 cells after longer exposure. Isoforms B and C are detected in kidney, cartilage, skin, lung and spleen. Isoform C is expressed at high level in skeletal muscle. In adult animals isoform A is expressed mainly in the nervous system.</text>
</comment>
<comment type="domain">
    <text evidence="6">Three regions, residues 59-172, 544-725 and the loop 66 amino acids, between the two transmembrane domains, known as Nogo-66 loop, appear to be responsible for the inhibitory effect on neurite outgrowth and the spreading of neurons. This Nogo-66 loop also mediates the binding of RTN4 to its receptor.</text>
</comment>
<comment type="domain">
    <molecule>Isoform B</molecule>
    <text evidence="2">N-terminal part, called Am-Nogo-B(1-200), is the functional domain for RTN4B-mediated signaling in endothelial and vascular smooth muscle cells.</text>
</comment>
<comment type="online information" name="Protein Spotlight">
    <link uri="https://www.proteinspotlight.org/back_issues/069"/>
    <text>Nerve regrowth: nipped by a no-go - Issue 69 of April 2006</text>
</comment>
<organism>
    <name type="scientific">Rattus norvegicus</name>
    <name type="common">Rat</name>
    <dbReference type="NCBI Taxonomy" id="10116"/>
    <lineage>
        <taxon>Eukaryota</taxon>
        <taxon>Metazoa</taxon>
        <taxon>Chordata</taxon>
        <taxon>Craniata</taxon>
        <taxon>Vertebrata</taxon>
        <taxon>Euteleostomi</taxon>
        <taxon>Mammalia</taxon>
        <taxon>Eutheria</taxon>
        <taxon>Euarchontoglires</taxon>
        <taxon>Glires</taxon>
        <taxon>Rodentia</taxon>
        <taxon>Myomorpha</taxon>
        <taxon>Muroidea</taxon>
        <taxon>Muridae</taxon>
        <taxon>Murinae</taxon>
        <taxon>Rattus</taxon>
    </lineage>
</organism>
<accession>Q9JK11</accession>
<accession>Q9JK10</accession>
<accession>Q9R0D9</accession>
<accession>Q9WUE9</accession>
<accession>Q9WUF0</accession>
<keyword id="KW-0007">Acetylation</keyword>
<keyword id="KW-0025">Alternative splicing</keyword>
<keyword id="KW-0965">Cell junction</keyword>
<keyword id="KW-1003">Cell membrane</keyword>
<keyword id="KW-0903">Direct protein sequencing</keyword>
<keyword id="KW-0256">Endoplasmic reticulum</keyword>
<keyword id="KW-0472">Membrane</keyword>
<keyword id="KW-0524">Neurogenesis</keyword>
<keyword id="KW-0597">Phosphoprotein</keyword>
<keyword id="KW-1185">Reference proteome</keyword>
<keyword id="KW-0770">Synapse</keyword>
<keyword id="KW-0812">Transmembrane</keyword>
<keyword id="KW-1133">Transmembrane helix</keyword>
<dbReference type="EMBL" id="AF051335">
    <property type="protein sequence ID" value="AAF01564.1"/>
    <property type="molecule type" value="mRNA"/>
</dbReference>
<dbReference type="EMBL" id="AJ242961">
    <property type="protein sequence ID" value="CAB71027.1"/>
    <property type="molecule type" value="mRNA"/>
</dbReference>
<dbReference type="EMBL" id="AJ242962">
    <property type="protein sequence ID" value="CAB71028.1"/>
    <property type="molecule type" value="mRNA"/>
</dbReference>
<dbReference type="EMBL" id="AJ242963">
    <property type="protein sequence ID" value="CAB71029.1"/>
    <property type="molecule type" value="mRNA"/>
</dbReference>
<dbReference type="EMBL" id="AF132045">
    <property type="protein sequence ID" value="AAD31019.1"/>
    <property type="molecule type" value="mRNA"/>
</dbReference>
<dbReference type="EMBL" id="AF132046">
    <property type="protein sequence ID" value="AAD31020.1"/>
    <property type="molecule type" value="mRNA"/>
</dbReference>
<dbReference type="RefSeq" id="NP_114019.1">
    <property type="nucleotide sequence ID" value="NM_031831.1"/>
</dbReference>
<dbReference type="RefSeq" id="XP_006251670.2">
    <molecule id="Q9JK11-2"/>
    <property type="nucleotide sequence ID" value="XM_006251608.3"/>
</dbReference>
<dbReference type="RefSeq" id="XP_006251671.1">
    <molecule id="Q9JK11-3"/>
    <property type="nucleotide sequence ID" value="XM_006251609.5"/>
</dbReference>
<dbReference type="RefSeq" id="XP_017454882.1">
    <molecule id="Q9JK11-4"/>
    <property type="nucleotide sequence ID" value="XM_017599393.3"/>
</dbReference>
<dbReference type="BMRB" id="Q9JK11"/>
<dbReference type="SMR" id="Q9JK11"/>
<dbReference type="BioGRID" id="249825">
    <property type="interactions" value="7"/>
</dbReference>
<dbReference type="DIP" id="DIP-37179N"/>
<dbReference type="FunCoup" id="Q9JK11">
    <property type="interactions" value="1460"/>
</dbReference>
<dbReference type="IntAct" id="Q9JK11">
    <property type="interactions" value="17"/>
</dbReference>
<dbReference type="MINT" id="Q9JK11"/>
<dbReference type="STRING" id="10116.ENSRNOP00000006443"/>
<dbReference type="GlyGen" id="Q9JK11">
    <property type="glycosylation" value="2 sites"/>
</dbReference>
<dbReference type="iPTMnet" id="Q9JK11"/>
<dbReference type="PhosphoSitePlus" id="Q9JK11"/>
<dbReference type="jPOST" id="Q9JK11"/>
<dbReference type="PaxDb" id="10116-ENSRNOP00000006443"/>
<dbReference type="ABCD" id="Q9JK11">
    <property type="antibodies" value="1 sequenced antibody"/>
</dbReference>
<dbReference type="Ensembl" id="ENSRNOT00000042965.4">
    <molecule id="Q9JK11-3"/>
    <property type="protein sequence ID" value="ENSRNOP00000040760.2"/>
    <property type="gene ID" value="ENSRNOG00000004621.9"/>
</dbReference>
<dbReference type="GeneID" id="83765"/>
<dbReference type="KEGG" id="rno:83765"/>
<dbReference type="UCSC" id="RGD:620989">
    <molecule id="Q9JK11-1"/>
    <property type="organism name" value="rat"/>
</dbReference>
<dbReference type="AGR" id="RGD:620989"/>
<dbReference type="CTD" id="57142"/>
<dbReference type="RGD" id="620989">
    <property type="gene designation" value="Rtn4"/>
</dbReference>
<dbReference type="VEuPathDB" id="HostDB:ENSRNOG00000004621"/>
<dbReference type="eggNOG" id="KOG1792">
    <property type="taxonomic scope" value="Eukaryota"/>
</dbReference>
<dbReference type="GeneTree" id="ENSGT00940000156568"/>
<dbReference type="HOGENOM" id="CLU_048580_0_0_1"/>
<dbReference type="InParanoid" id="Q9JK11"/>
<dbReference type="OMA" id="DGQKKHW"/>
<dbReference type="PhylomeDB" id="Q9JK11"/>
<dbReference type="Reactome" id="R-RNO-193634">
    <property type="pathway name" value="Axonal growth inhibition (RHOA activation)"/>
</dbReference>
<dbReference type="PRO" id="PR:Q9JK11"/>
<dbReference type="Proteomes" id="UP000002494">
    <property type="component" value="Chromosome 14"/>
</dbReference>
<dbReference type="Bgee" id="ENSRNOG00000004621">
    <property type="expression patterns" value="Expressed in quadriceps femoris and 19 other cell types or tissues"/>
</dbReference>
<dbReference type="ExpressionAtlas" id="Q9JK11">
    <property type="expression patterns" value="baseline and differential"/>
</dbReference>
<dbReference type="GO" id="GO:0070161">
    <property type="term" value="C:anchoring junction"/>
    <property type="evidence" value="ECO:0007669"/>
    <property type="project" value="UniProtKB-SubCell"/>
</dbReference>
<dbReference type="GO" id="GO:0030054">
    <property type="term" value="C:cell junction"/>
    <property type="evidence" value="ECO:0000250"/>
    <property type="project" value="UniProtKB"/>
</dbReference>
<dbReference type="GO" id="GO:0042995">
    <property type="term" value="C:cell projection"/>
    <property type="evidence" value="ECO:0000266"/>
    <property type="project" value="RGD"/>
</dbReference>
<dbReference type="GO" id="GO:0005783">
    <property type="term" value="C:endoplasmic reticulum"/>
    <property type="evidence" value="ECO:0000266"/>
    <property type="project" value="RGD"/>
</dbReference>
<dbReference type="GO" id="GO:0005789">
    <property type="term" value="C:endoplasmic reticulum membrane"/>
    <property type="evidence" value="ECO:0000314"/>
    <property type="project" value="UniProtKB"/>
</dbReference>
<dbReference type="GO" id="GO:0071782">
    <property type="term" value="C:endoplasmic reticulum tubular network"/>
    <property type="evidence" value="ECO:0000266"/>
    <property type="project" value="RGD"/>
</dbReference>
<dbReference type="GO" id="GO:0098826">
    <property type="term" value="C:endoplasmic reticulum tubular network membrane"/>
    <property type="evidence" value="ECO:0000250"/>
    <property type="project" value="UniProtKB"/>
</dbReference>
<dbReference type="GO" id="GO:0098978">
    <property type="term" value="C:glutamatergic synapse"/>
    <property type="evidence" value="ECO:0000314"/>
    <property type="project" value="SynGO"/>
</dbReference>
<dbReference type="GO" id="GO:0043005">
    <property type="term" value="C:neuron projection"/>
    <property type="evidence" value="ECO:0000318"/>
    <property type="project" value="GO_Central"/>
</dbReference>
<dbReference type="GO" id="GO:0043025">
    <property type="term" value="C:neuronal cell body"/>
    <property type="evidence" value="ECO:0000314"/>
    <property type="project" value="RGD"/>
</dbReference>
<dbReference type="GO" id="GO:0005635">
    <property type="term" value="C:nuclear envelope"/>
    <property type="evidence" value="ECO:0000250"/>
    <property type="project" value="UniProtKB"/>
</dbReference>
<dbReference type="GO" id="GO:0098794">
    <property type="term" value="C:postsynapse"/>
    <property type="evidence" value="ECO:0000314"/>
    <property type="project" value="SynGO"/>
</dbReference>
<dbReference type="GO" id="GO:0014069">
    <property type="term" value="C:postsynaptic density"/>
    <property type="evidence" value="ECO:0000266"/>
    <property type="project" value="RGD"/>
</dbReference>
<dbReference type="GO" id="GO:0098839">
    <property type="term" value="C:postsynaptic density membrane"/>
    <property type="evidence" value="ECO:0000314"/>
    <property type="project" value="SynGO"/>
</dbReference>
<dbReference type="GO" id="GO:0032991">
    <property type="term" value="C:protein-containing complex"/>
    <property type="evidence" value="ECO:0000314"/>
    <property type="project" value="RGD"/>
</dbReference>
<dbReference type="GO" id="GO:0045202">
    <property type="term" value="C:synapse"/>
    <property type="evidence" value="ECO:0000250"/>
    <property type="project" value="UniProtKB"/>
</dbReference>
<dbReference type="GO" id="GO:0044877">
    <property type="term" value="F:protein-containing complex binding"/>
    <property type="evidence" value="ECO:0000314"/>
    <property type="project" value="RGD"/>
</dbReference>
<dbReference type="GO" id="GO:0031625">
    <property type="term" value="F:ubiquitin protein ligase binding"/>
    <property type="evidence" value="ECO:0000266"/>
    <property type="project" value="RGD"/>
</dbReference>
<dbReference type="GO" id="GO:0007413">
    <property type="term" value="P:axonal fasciculation"/>
    <property type="evidence" value="ECO:0000314"/>
    <property type="project" value="UniProtKB"/>
</dbReference>
<dbReference type="GO" id="GO:0001825">
    <property type="term" value="P:blastocyst formation"/>
    <property type="evidence" value="ECO:0000266"/>
    <property type="project" value="RGD"/>
</dbReference>
<dbReference type="GO" id="GO:0007420">
    <property type="term" value="P:brain development"/>
    <property type="evidence" value="ECO:0000318"/>
    <property type="project" value="GO_Central"/>
</dbReference>
<dbReference type="GO" id="GO:0060317">
    <property type="term" value="P:cardiac epithelial to mesenchymal transition"/>
    <property type="evidence" value="ECO:0000266"/>
    <property type="project" value="RGD"/>
</dbReference>
<dbReference type="GO" id="GO:0120078">
    <property type="term" value="P:cell adhesion involved in sprouting angiogenesis"/>
    <property type="evidence" value="ECO:0000250"/>
    <property type="project" value="UniProtKB"/>
</dbReference>
<dbReference type="GO" id="GO:0035441">
    <property type="term" value="P:cell migration involved in vasculogenesis"/>
    <property type="evidence" value="ECO:0000250"/>
    <property type="project" value="UniProtKB"/>
</dbReference>
<dbReference type="GO" id="GO:0071456">
    <property type="term" value="P:cellular response to hypoxia"/>
    <property type="evidence" value="ECO:0000250"/>
    <property type="project" value="UniProtKB"/>
</dbReference>
<dbReference type="GO" id="GO:0022009">
    <property type="term" value="P:central nervous system vasculogenesis"/>
    <property type="evidence" value="ECO:0000250"/>
    <property type="project" value="UniProtKB"/>
</dbReference>
<dbReference type="GO" id="GO:0021801">
    <property type="term" value="P:cerebral cortex radial glia-guided migration"/>
    <property type="evidence" value="ECO:0000250"/>
    <property type="project" value="UniProtKB"/>
</dbReference>
<dbReference type="GO" id="GO:0071787">
    <property type="term" value="P:endoplasmic reticulum tubular network formation"/>
    <property type="evidence" value="ECO:0000250"/>
    <property type="project" value="UniProtKB"/>
</dbReference>
<dbReference type="GO" id="GO:1990809">
    <property type="term" value="P:endoplasmic reticulum tubular network membrane organization"/>
    <property type="evidence" value="ECO:0000250"/>
    <property type="project" value="UniProtKB"/>
</dbReference>
<dbReference type="GO" id="GO:0071786">
    <property type="term" value="P:endoplasmic reticulum tubular network organization"/>
    <property type="evidence" value="ECO:0000250"/>
    <property type="project" value="UniProtKB"/>
</dbReference>
<dbReference type="GO" id="GO:0090156">
    <property type="term" value="P:intracellular sphingolipid homeostasis"/>
    <property type="evidence" value="ECO:0000266"/>
    <property type="project" value="RGD"/>
</dbReference>
<dbReference type="GO" id="GO:0002523">
    <property type="term" value="P:leukocyte migration involved in inflammatory response"/>
    <property type="evidence" value="ECO:0000250"/>
    <property type="project" value="UniProtKB"/>
</dbReference>
<dbReference type="GO" id="GO:0050804">
    <property type="term" value="P:modulation of chemical synaptic transmission"/>
    <property type="evidence" value="ECO:0000266"/>
    <property type="project" value="RGD"/>
</dbReference>
<dbReference type="GO" id="GO:1902430">
    <property type="term" value="P:negative regulation of amyloid-beta formation"/>
    <property type="evidence" value="ECO:0000250"/>
    <property type="project" value="UniProtKB"/>
</dbReference>
<dbReference type="GO" id="GO:0030517">
    <property type="term" value="P:negative regulation of axon extension"/>
    <property type="evidence" value="ECO:0000314"/>
    <property type="project" value="UniProtKB"/>
</dbReference>
<dbReference type="GO" id="GO:0050771">
    <property type="term" value="P:negative regulation of axonogenesis"/>
    <property type="evidence" value="ECO:0000314"/>
    <property type="project" value="RGD"/>
</dbReference>
<dbReference type="GO" id="GO:0030308">
    <property type="term" value="P:negative regulation of cell growth"/>
    <property type="evidence" value="ECO:0000266"/>
    <property type="project" value="RGD"/>
</dbReference>
<dbReference type="GO" id="GO:0045665">
    <property type="term" value="P:negative regulation of neuron differentiation"/>
    <property type="evidence" value="ECO:0000314"/>
    <property type="project" value="RGD"/>
</dbReference>
<dbReference type="GO" id="GO:0010977">
    <property type="term" value="P:negative regulation of neuron projection development"/>
    <property type="evidence" value="ECO:0000314"/>
    <property type="project" value="RGD"/>
</dbReference>
<dbReference type="GO" id="GO:0070571">
    <property type="term" value="P:negative regulation of neuron projection regeneration"/>
    <property type="evidence" value="ECO:0000315"/>
    <property type="project" value="RGD"/>
</dbReference>
<dbReference type="GO" id="GO:2001213">
    <property type="term" value="P:negative regulation of vasculogenesis"/>
    <property type="evidence" value="ECO:0000250"/>
    <property type="project" value="UniProtKB"/>
</dbReference>
<dbReference type="GO" id="GO:0007399">
    <property type="term" value="P:nervous system development"/>
    <property type="evidence" value="ECO:0000266"/>
    <property type="project" value="RGD"/>
</dbReference>
<dbReference type="GO" id="GO:0030182">
    <property type="term" value="P:neuron differentiation"/>
    <property type="evidence" value="ECO:0000318"/>
    <property type="project" value="GO_Central"/>
</dbReference>
<dbReference type="GO" id="GO:0051292">
    <property type="term" value="P:nuclear pore complex assembly"/>
    <property type="evidence" value="ECO:0000250"/>
    <property type="project" value="UniProtKB"/>
</dbReference>
<dbReference type="GO" id="GO:0021553">
    <property type="term" value="P:olfactory nerve development"/>
    <property type="evidence" value="ECO:0000270"/>
    <property type="project" value="RGD"/>
</dbReference>
<dbReference type="GO" id="GO:0048709">
    <property type="term" value="P:oligodendrocyte differentiation"/>
    <property type="evidence" value="ECO:0000270"/>
    <property type="project" value="RGD"/>
</dbReference>
<dbReference type="GO" id="GO:0045766">
    <property type="term" value="P:positive regulation of angiogenesis"/>
    <property type="evidence" value="ECO:0000250"/>
    <property type="project" value="UniProtKB"/>
</dbReference>
<dbReference type="GO" id="GO:1905653">
    <property type="term" value="P:positive regulation of artery morphogenesis"/>
    <property type="evidence" value="ECO:0000250"/>
    <property type="project" value="UniProtKB"/>
</dbReference>
<dbReference type="GO" id="GO:0033603">
    <property type="term" value="P:positive regulation of dopamine secretion"/>
    <property type="evidence" value="ECO:0000315"/>
    <property type="project" value="RGD"/>
</dbReference>
<dbReference type="GO" id="GO:0010634">
    <property type="term" value="P:positive regulation of epithelial cell migration"/>
    <property type="evidence" value="ECO:0000266"/>
    <property type="project" value="RGD"/>
</dbReference>
<dbReference type="GO" id="GO:1905580">
    <property type="term" value="P:positive regulation of ERBB3 signaling pathway"/>
    <property type="evidence" value="ECO:0000266"/>
    <property type="project" value="RGD"/>
</dbReference>
<dbReference type="GO" id="GO:0045687">
    <property type="term" value="P:positive regulation of glial cell differentiation"/>
    <property type="evidence" value="ECO:0000314"/>
    <property type="project" value="RGD"/>
</dbReference>
<dbReference type="GO" id="GO:2000347">
    <property type="term" value="P:positive regulation of hepatocyte proliferation"/>
    <property type="evidence" value="ECO:0000250"/>
    <property type="project" value="UniProtKB"/>
</dbReference>
<dbReference type="GO" id="GO:0060907">
    <property type="term" value="P:positive regulation of macrophage cytokine production"/>
    <property type="evidence" value="ECO:0000250"/>
    <property type="project" value="UniProtKB"/>
</dbReference>
<dbReference type="GO" id="GO:1905523">
    <property type="term" value="P:positive regulation of macrophage migration"/>
    <property type="evidence" value="ECO:0000250"/>
    <property type="project" value="UniProtKB"/>
</dbReference>
<dbReference type="GO" id="GO:0033601">
    <property type="term" value="P:positive regulation of mammary gland epithelial cell proliferation"/>
    <property type="evidence" value="ECO:0000266"/>
    <property type="project" value="RGD"/>
</dbReference>
<dbReference type="GO" id="GO:1902624">
    <property type="term" value="P:positive regulation of neutrophil migration"/>
    <property type="evidence" value="ECO:0000250"/>
    <property type="project" value="UniProtKB"/>
</dbReference>
<dbReference type="GO" id="GO:0051897">
    <property type="term" value="P:positive regulation of phosphatidylinositol 3-kinase/protein kinase B signal transduction"/>
    <property type="evidence" value="ECO:0000266"/>
    <property type="project" value="RGD"/>
</dbReference>
<dbReference type="GO" id="GO:1905552">
    <property type="term" value="P:positive regulation of protein localization to endoplasmic reticulum"/>
    <property type="evidence" value="ECO:0000266"/>
    <property type="project" value="RGD"/>
</dbReference>
<dbReference type="GO" id="GO:0035022">
    <property type="term" value="P:positive regulation of Rac protein signal transduction"/>
    <property type="evidence" value="ECO:0000250"/>
    <property type="project" value="UniProtKB"/>
</dbReference>
<dbReference type="GO" id="GO:0034165">
    <property type="term" value="P:positive regulation of toll-like receptor 9 signaling pathway"/>
    <property type="evidence" value="ECO:0000250"/>
    <property type="project" value="UniProtKB"/>
</dbReference>
<dbReference type="GO" id="GO:0061462">
    <property type="term" value="P:protein localization to lysosome"/>
    <property type="evidence" value="ECO:0000250"/>
    <property type="project" value="UniProtKB"/>
</dbReference>
<dbReference type="GO" id="GO:0050821">
    <property type="term" value="P:protein stabilization"/>
    <property type="evidence" value="ECO:0000266"/>
    <property type="project" value="RGD"/>
</dbReference>
<dbReference type="GO" id="GO:2000172">
    <property type="term" value="P:regulation of branching morphogenesis of a nerve"/>
    <property type="evidence" value="ECO:0000314"/>
    <property type="project" value="UniProtKB"/>
</dbReference>
<dbReference type="GO" id="GO:0051960">
    <property type="term" value="P:regulation of nervous system development"/>
    <property type="evidence" value="ECO:0000266"/>
    <property type="project" value="RGD"/>
</dbReference>
<dbReference type="GO" id="GO:0150052">
    <property type="term" value="P:regulation of postsynapse assembly"/>
    <property type="evidence" value="ECO:0000266"/>
    <property type="project" value="RGD"/>
</dbReference>
<dbReference type="GO" id="GO:0014823">
    <property type="term" value="P:response to activity"/>
    <property type="evidence" value="ECO:0000270"/>
    <property type="project" value="RGD"/>
</dbReference>
<dbReference type="DisProt" id="DP01152"/>
<dbReference type="FunFam" id="1.20.5.2480:FF:000001">
    <property type="entry name" value="Reticulon"/>
    <property type="match status" value="1"/>
</dbReference>
<dbReference type="Gene3D" id="1.20.5.2480">
    <property type="match status" value="1"/>
</dbReference>
<dbReference type="InterPro" id="IPR003388">
    <property type="entry name" value="Reticulon"/>
</dbReference>
<dbReference type="InterPro" id="IPR046964">
    <property type="entry name" value="RTN1-4"/>
</dbReference>
<dbReference type="PANTHER" id="PTHR45799:SF1">
    <property type="entry name" value="RETICULON-4"/>
    <property type="match status" value="1"/>
</dbReference>
<dbReference type="PANTHER" id="PTHR45799">
    <property type="entry name" value="RETICULON-LIKE PROTEIN"/>
    <property type="match status" value="1"/>
</dbReference>
<dbReference type="Pfam" id="PF02453">
    <property type="entry name" value="Reticulon"/>
    <property type="match status" value="1"/>
</dbReference>
<dbReference type="PROSITE" id="PS50845">
    <property type="entry name" value="RETICULON"/>
    <property type="match status" value="1"/>
</dbReference>
<gene>
    <name type="primary">Rtn4</name>
    <name type="synonym">Nogo</name>
</gene>
<protein>
    <recommendedName>
        <fullName>Reticulon-4</fullName>
    </recommendedName>
    <alternativeName>
        <fullName>Foocen</fullName>
    </alternativeName>
    <alternativeName>
        <fullName>Glut4 vesicle 20 kDa protein</fullName>
    </alternativeName>
    <alternativeName>
        <fullName>Neurite outgrowth inhibitor</fullName>
        <shortName>Nogo protein</shortName>
    </alternativeName>
</protein>